<proteinExistence type="evidence at transcript level"/>
<keyword id="KW-0158">Chromosome</keyword>
<keyword id="KW-0963">Cytoplasm</keyword>
<keyword id="KW-1015">Disulfide bond</keyword>
<keyword id="KW-0238">DNA-binding</keyword>
<keyword id="KW-0391">Immunity</keyword>
<keyword id="KW-0399">Innate immunity</keyword>
<keyword id="KW-0539">Nucleus</keyword>
<keyword id="KW-0558">Oxidation</keyword>
<keyword id="KW-1185">Reference proteome</keyword>
<keyword id="KW-0677">Repeat</keyword>
<keyword id="KW-0804">Transcription</keyword>
<keyword id="KW-0805">Transcription regulation</keyword>
<accession>P40618</accession>
<accession>F1NGP8</accession>
<accession>P36194</accession>
<reference key="1">
    <citation type="journal article" date="1992" name="Biochim. Biophys. Acta">
        <title>Molecular cloning of chick liver HMG 2a cDNA and developmental expression of HMG 2a mRNA.</title>
        <authorList>
            <person name="Oka T."/>
            <person name="Endo Y."/>
            <person name="Ito M."/>
            <person name="Miyamoto K."/>
            <person name="Sasakawa T."/>
            <person name="Suzuki I."/>
            <person name="Natori Y."/>
        </authorList>
    </citation>
    <scope>NUCLEOTIDE SEQUENCE [MRNA]</scope>
    <source>
        <strain>White leghorn</strain>
        <tissue>Liver</tissue>
    </source>
</reference>
<reference key="2">
    <citation type="journal article" date="1993" name="Development">
        <title>Delta-crystallin enhancer binding protein delta EF1 is a zinc finger-homeodomain protein implicated in postgastrulation embryogenesis.</title>
        <authorList>
            <person name="Funahashi J."/>
            <person name="Sekido R."/>
            <person name="Murai K."/>
            <person name="Kamachi Y."/>
            <person name="Kondoh H."/>
        </authorList>
    </citation>
    <scope>NUCLEOTIDE SEQUENCE [MRNA]</scope>
    <scope>FUNCTION</scope>
    <scope>SUBCELLULAR LOCATION</scope>
</reference>
<reference key="3">
    <citation type="journal article" date="2004" name="Nature">
        <title>Sequence and comparative analysis of the chicken genome provide unique perspectives on vertebrate evolution.</title>
        <authorList>
            <person name="Hillier L.W."/>
            <person name="Miller W."/>
            <person name="Birney E."/>
            <person name="Warren W."/>
            <person name="Hardison R.C."/>
            <person name="Ponting C.P."/>
            <person name="Bork P."/>
            <person name="Burt D.W."/>
            <person name="Groenen M.A.M."/>
            <person name="Delany M.E."/>
            <person name="Dodgson J.B."/>
            <person name="Chinwalla A.T."/>
            <person name="Cliften P.F."/>
            <person name="Clifton S.W."/>
            <person name="Delehaunty K.D."/>
            <person name="Fronick C."/>
            <person name="Fulton R.S."/>
            <person name="Graves T.A."/>
            <person name="Kremitzki C."/>
            <person name="Layman D."/>
            <person name="Magrini V."/>
            <person name="McPherson J.D."/>
            <person name="Miner T.L."/>
            <person name="Minx P."/>
            <person name="Nash W.E."/>
            <person name="Nhan M.N."/>
            <person name="Nelson J.O."/>
            <person name="Oddy L.G."/>
            <person name="Pohl C.S."/>
            <person name="Randall-Maher J."/>
            <person name="Smith S.M."/>
            <person name="Wallis J.W."/>
            <person name="Yang S.-P."/>
            <person name="Romanov M.N."/>
            <person name="Rondelli C.M."/>
            <person name="Paton B."/>
            <person name="Smith J."/>
            <person name="Morrice D."/>
            <person name="Daniels L."/>
            <person name="Tempest H.G."/>
            <person name="Robertson L."/>
            <person name="Masabanda J.S."/>
            <person name="Griffin D.K."/>
            <person name="Vignal A."/>
            <person name="Fillon V."/>
            <person name="Jacobbson L."/>
            <person name="Kerje S."/>
            <person name="Andersson L."/>
            <person name="Crooijmans R.P."/>
            <person name="Aerts J."/>
            <person name="van der Poel J.J."/>
            <person name="Ellegren H."/>
            <person name="Caldwell R.B."/>
            <person name="Hubbard S.J."/>
            <person name="Grafham D.V."/>
            <person name="Kierzek A.M."/>
            <person name="McLaren S.R."/>
            <person name="Overton I.M."/>
            <person name="Arakawa H."/>
            <person name="Beattie K.J."/>
            <person name="Bezzubov Y."/>
            <person name="Boardman P.E."/>
            <person name="Bonfield J.K."/>
            <person name="Croning M.D.R."/>
            <person name="Davies R.M."/>
            <person name="Francis M.D."/>
            <person name="Humphray S.J."/>
            <person name="Scott C.E."/>
            <person name="Taylor R.G."/>
            <person name="Tickle C."/>
            <person name="Brown W.R.A."/>
            <person name="Rogers J."/>
            <person name="Buerstedde J.-M."/>
            <person name="Wilson S.A."/>
            <person name="Stubbs L."/>
            <person name="Ovcharenko I."/>
            <person name="Gordon L."/>
            <person name="Lucas S."/>
            <person name="Miller M.M."/>
            <person name="Inoko H."/>
            <person name="Shiina T."/>
            <person name="Kaufman J."/>
            <person name="Salomonsen J."/>
            <person name="Skjoedt K."/>
            <person name="Wong G.K.-S."/>
            <person name="Wang J."/>
            <person name="Liu B."/>
            <person name="Wang J."/>
            <person name="Yu J."/>
            <person name="Yang H."/>
            <person name="Nefedov M."/>
            <person name="Koriabine M."/>
            <person name="Dejong P.J."/>
            <person name="Goodstadt L."/>
            <person name="Webber C."/>
            <person name="Dickens N.J."/>
            <person name="Letunic I."/>
            <person name="Suyama M."/>
            <person name="Torrents D."/>
            <person name="von Mering C."/>
            <person name="Zdobnov E.M."/>
            <person name="Makova K."/>
            <person name="Nekrutenko A."/>
            <person name="Elnitski L."/>
            <person name="Eswara P."/>
            <person name="King D.C."/>
            <person name="Yang S.-P."/>
            <person name="Tyekucheva S."/>
            <person name="Radakrishnan A."/>
            <person name="Harris R.S."/>
            <person name="Chiaromonte F."/>
            <person name="Taylor J."/>
            <person name="He J."/>
            <person name="Rijnkels M."/>
            <person name="Griffiths-Jones S."/>
            <person name="Ureta-Vidal A."/>
            <person name="Hoffman M.M."/>
            <person name="Severin J."/>
            <person name="Searle S.M.J."/>
            <person name="Law A.S."/>
            <person name="Speed D."/>
            <person name="Waddington D."/>
            <person name="Cheng Z."/>
            <person name="Tuzun E."/>
            <person name="Eichler E."/>
            <person name="Bao Z."/>
            <person name="Flicek P."/>
            <person name="Shteynberg D.D."/>
            <person name="Brent M.R."/>
            <person name="Bye J.M."/>
            <person name="Huckle E.J."/>
            <person name="Chatterji S."/>
            <person name="Dewey C."/>
            <person name="Pachter L."/>
            <person name="Kouranov A."/>
            <person name="Mourelatos Z."/>
            <person name="Hatzigeorgiou A.G."/>
            <person name="Paterson A.H."/>
            <person name="Ivarie R."/>
            <person name="Brandstrom M."/>
            <person name="Axelsson E."/>
            <person name="Backstrom N."/>
            <person name="Berlin S."/>
            <person name="Webster M.T."/>
            <person name="Pourquie O."/>
            <person name="Reymond A."/>
            <person name="Ucla C."/>
            <person name="Antonarakis S.E."/>
            <person name="Long M."/>
            <person name="Emerson J.J."/>
            <person name="Betran E."/>
            <person name="Dupanloup I."/>
            <person name="Kaessmann H."/>
            <person name="Hinrichs A.S."/>
            <person name="Bejerano G."/>
            <person name="Furey T.S."/>
            <person name="Harte R.A."/>
            <person name="Raney B."/>
            <person name="Siepel A."/>
            <person name="Kent W.J."/>
            <person name="Haussler D."/>
            <person name="Eyras E."/>
            <person name="Castelo R."/>
            <person name="Abril J.F."/>
            <person name="Castellano S."/>
            <person name="Camara F."/>
            <person name="Parra G."/>
            <person name="Guigo R."/>
            <person name="Bourque G."/>
            <person name="Tesler G."/>
            <person name="Pevzner P.A."/>
            <person name="Smit A."/>
            <person name="Fulton L.A."/>
            <person name="Mardis E.R."/>
            <person name="Wilson R.K."/>
        </authorList>
    </citation>
    <scope>NUCLEOTIDE SEQUENCE [LARGE SCALE GENOMIC DNA]</scope>
    <source>
        <strain>Red jungle fowl</strain>
    </source>
</reference>
<protein>
    <recommendedName>
        <fullName>High mobility group protein B3</fullName>
    </recommendedName>
    <alternativeName>
        <fullName>High mobility group protein 2a</fullName>
        <shortName>HMG-2a</shortName>
    </alternativeName>
    <alternativeName>
        <fullName>High mobility group protein 4</fullName>
        <shortName>HMG-4</shortName>
    </alternativeName>
</protein>
<organism>
    <name type="scientific">Gallus gallus</name>
    <name type="common">Chicken</name>
    <dbReference type="NCBI Taxonomy" id="9031"/>
    <lineage>
        <taxon>Eukaryota</taxon>
        <taxon>Metazoa</taxon>
        <taxon>Chordata</taxon>
        <taxon>Craniata</taxon>
        <taxon>Vertebrata</taxon>
        <taxon>Euteleostomi</taxon>
        <taxon>Archelosauria</taxon>
        <taxon>Archosauria</taxon>
        <taxon>Dinosauria</taxon>
        <taxon>Saurischia</taxon>
        <taxon>Theropoda</taxon>
        <taxon>Coelurosauria</taxon>
        <taxon>Aves</taxon>
        <taxon>Neognathae</taxon>
        <taxon>Galloanserae</taxon>
        <taxon>Galliformes</taxon>
        <taxon>Phasianidae</taxon>
        <taxon>Phasianinae</taxon>
        <taxon>Gallus</taxon>
    </lineage>
</organism>
<gene>
    <name type="primary">HMGB3</name>
    <name type="synonym">HMG2A</name>
    <name type="synonym">HMG4</name>
</gene>
<name>HMGB3_CHICK</name>
<feature type="initiator methionine" description="Removed" evidence="1">
    <location>
        <position position="1"/>
    </location>
</feature>
<feature type="chain" id="PRO_0000048541" description="High mobility group protein B3">
    <location>
        <begin position="2"/>
        <end position="202"/>
    </location>
</feature>
<feature type="DNA-binding region" description="HMG box 1" evidence="5">
    <location>
        <begin position="9"/>
        <end position="79"/>
    </location>
</feature>
<feature type="DNA-binding region" description="HMG box 2" evidence="5">
    <location>
        <begin position="93"/>
        <end position="161"/>
    </location>
</feature>
<feature type="region of interest" description="Disordered" evidence="6">
    <location>
        <begin position="71"/>
        <end position="98"/>
    </location>
</feature>
<feature type="region of interest" description="Disordered" evidence="6">
    <location>
        <begin position="161"/>
        <end position="202"/>
    </location>
</feature>
<feature type="compositionally biased region" description="Acidic residues" evidence="6">
    <location>
        <begin position="183"/>
        <end position="202"/>
    </location>
</feature>
<feature type="modified residue" description="Cysteine sulfonic acid (-SO3H); alternate" evidence="4">
    <location>
        <position position="23"/>
    </location>
</feature>
<feature type="modified residue" description="Cysteine sulfonic acid (-SO3H); alternate" evidence="4">
    <location>
        <position position="45"/>
    </location>
</feature>
<feature type="modified residue" description="Cysteine sulfonic acid (-SO3H)" evidence="4">
    <location>
        <position position="104"/>
    </location>
</feature>
<feature type="disulfide bond" description="In disulfide HMGB3" evidence="4">
    <location>
        <begin position="23"/>
        <end position="45"/>
    </location>
</feature>
<feature type="sequence conflict" description="In Ref. 2; BAA03260." evidence="8" ref="2">
    <location>
        <position position="30"/>
    </location>
</feature>
<feature type="sequence conflict" description="In Ref. 1; CAA45065." evidence="8" ref="1">
    <original>G</original>
    <variation>A</variation>
    <location>
        <position position="99"/>
    </location>
</feature>
<dbReference type="EMBL" id="X63463">
    <property type="protein sequence ID" value="CAA45065.1"/>
    <property type="molecule type" value="mRNA"/>
</dbReference>
<dbReference type="EMBL" id="AADN03004033">
    <property type="status" value="NOT_ANNOTATED_CDS"/>
    <property type="molecule type" value="Genomic_DNA"/>
</dbReference>
<dbReference type="EMBL" id="AADN03004127">
    <property type="status" value="NOT_ANNOTATED_CDS"/>
    <property type="molecule type" value="Genomic_DNA"/>
</dbReference>
<dbReference type="EMBL" id="D14314">
    <property type="protein sequence ID" value="BAA03260.1"/>
    <property type="molecule type" value="mRNA"/>
</dbReference>
<dbReference type="PIR" id="S22359">
    <property type="entry name" value="S22359"/>
</dbReference>
<dbReference type="RefSeq" id="NP_990626.3">
    <property type="nucleotide sequence ID" value="NM_205295.2"/>
</dbReference>
<dbReference type="SMR" id="P40618"/>
<dbReference type="FunCoup" id="P40618">
    <property type="interactions" value="316"/>
</dbReference>
<dbReference type="STRING" id="9031.ENSGALP00000014747"/>
<dbReference type="PaxDb" id="9031-ENSGALP00000014747"/>
<dbReference type="Ensembl" id="ENSGALT00010027308.1">
    <property type="protein sequence ID" value="ENSGALP00010015562.1"/>
    <property type="gene ID" value="ENSGALG00010011420.1"/>
</dbReference>
<dbReference type="GeneID" id="396232"/>
<dbReference type="KEGG" id="gga:396232"/>
<dbReference type="CTD" id="3149"/>
<dbReference type="VEuPathDB" id="HostDB:geneid_396232"/>
<dbReference type="eggNOG" id="KOG0381">
    <property type="taxonomic scope" value="Eukaryota"/>
</dbReference>
<dbReference type="GeneTree" id="ENSGT00940000153299"/>
<dbReference type="HOGENOM" id="CLU_082854_0_0_1"/>
<dbReference type="InParanoid" id="P40618"/>
<dbReference type="OMA" id="DPAYENQ"/>
<dbReference type="OrthoDB" id="1919336at2759"/>
<dbReference type="TreeFam" id="TF105371"/>
<dbReference type="PRO" id="PR:P40618"/>
<dbReference type="Proteomes" id="UP000000539">
    <property type="component" value="Chromosome 4"/>
</dbReference>
<dbReference type="Bgee" id="ENSGALG00000009071">
    <property type="expression patterns" value="Expressed in spermatid and 13 other cell types or tissues"/>
</dbReference>
<dbReference type="GO" id="GO:0005694">
    <property type="term" value="C:chromosome"/>
    <property type="evidence" value="ECO:0007669"/>
    <property type="project" value="UniProtKB-SubCell"/>
</dbReference>
<dbReference type="GO" id="GO:0005737">
    <property type="term" value="C:cytoplasm"/>
    <property type="evidence" value="ECO:0007669"/>
    <property type="project" value="UniProtKB-SubCell"/>
</dbReference>
<dbReference type="GO" id="GO:0005634">
    <property type="term" value="C:nucleus"/>
    <property type="evidence" value="ECO:0007669"/>
    <property type="project" value="UniProtKB-SubCell"/>
</dbReference>
<dbReference type="GO" id="GO:0008301">
    <property type="term" value="F:DNA binding, bending"/>
    <property type="evidence" value="ECO:0000314"/>
    <property type="project" value="AgBase"/>
</dbReference>
<dbReference type="GO" id="GO:0000400">
    <property type="term" value="F:four-way junction DNA binding"/>
    <property type="evidence" value="ECO:0000314"/>
    <property type="project" value="AgBase"/>
</dbReference>
<dbReference type="GO" id="GO:0032392">
    <property type="term" value="P:DNA geometric change"/>
    <property type="evidence" value="ECO:0000314"/>
    <property type="project" value="AgBase"/>
</dbReference>
<dbReference type="GO" id="GO:0045087">
    <property type="term" value="P:innate immune response"/>
    <property type="evidence" value="ECO:0007669"/>
    <property type="project" value="UniProtKB-KW"/>
</dbReference>
<dbReference type="CDD" id="cd21978">
    <property type="entry name" value="HMG-box_HMGB_rpt1"/>
    <property type="match status" value="1"/>
</dbReference>
<dbReference type="CDD" id="cd21979">
    <property type="entry name" value="HMG-box_HMGB_rpt2"/>
    <property type="match status" value="1"/>
</dbReference>
<dbReference type="FunFam" id="1.10.30.10:FF:000013">
    <property type="entry name" value="High mobility group protein B3"/>
    <property type="match status" value="1"/>
</dbReference>
<dbReference type="FunFam" id="1.10.30.10:FF:000017">
    <property type="entry name" value="high mobility group protein B3"/>
    <property type="match status" value="1"/>
</dbReference>
<dbReference type="Gene3D" id="1.10.30.10">
    <property type="entry name" value="High mobility group box domain"/>
    <property type="match status" value="2"/>
</dbReference>
<dbReference type="InterPro" id="IPR009071">
    <property type="entry name" value="HMG_box_dom"/>
</dbReference>
<dbReference type="InterPro" id="IPR036910">
    <property type="entry name" value="HMG_box_dom_sf"/>
</dbReference>
<dbReference type="InterPro" id="IPR017967">
    <property type="entry name" value="HMG_boxA_CS"/>
</dbReference>
<dbReference type="InterPro" id="IPR050342">
    <property type="entry name" value="HMGB"/>
</dbReference>
<dbReference type="PANTHER" id="PTHR48112:SF32">
    <property type="entry name" value="HIGH MOBILITY GROUP PROTEIN B3"/>
    <property type="match status" value="1"/>
</dbReference>
<dbReference type="PANTHER" id="PTHR48112">
    <property type="entry name" value="HIGH MOBILITY GROUP PROTEIN DSP1"/>
    <property type="match status" value="1"/>
</dbReference>
<dbReference type="Pfam" id="PF00505">
    <property type="entry name" value="HMG_box"/>
    <property type="match status" value="1"/>
</dbReference>
<dbReference type="Pfam" id="PF09011">
    <property type="entry name" value="HMG_box_2"/>
    <property type="match status" value="1"/>
</dbReference>
<dbReference type="PRINTS" id="PR00886">
    <property type="entry name" value="HIGHMOBLTY12"/>
</dbReference>
<dbReference type="SMART" id="SM00398">
    <property type="entry name" value="HMG"/>
    <property type="match status" value="2"/>
</dbReference>
<dbReference type="SUPFAM" id="SSF47095">
    <property type="entry name" value="HMG-box"/>
    <property type="match status" value="2"/>
</dbReference>
<dbReference type="PROSITE" id="PS00353">
    <property type="entry name" value="HMG_BOX_1"/>
    <property type="match status" value="1"/>
</dbReference>
<dbReference type="PROSITE" id="PS50118">
    <property type="entry name" value="HMG_BOX_2"/>
    <property type="match status" value="2"/>
</dbReference>
<sequence length="202" mass="23057">MAKGDPKKPKGKMSAYAFFVQTCREEHKKKNPEVPVNFAEFSKKCSERWKTMSSKEKAKFDEMAKADKVRYDREMKDYGPAKGGKKKKDPNAPKRPPSGFFLFCSEFRPKIKSTNPGISIGDVAKKLGEMWNNLSDGEKQPYNNKAAKLKEKYEKDVADYKSKGKFDGAKGAATKAARKKVEEEDEEEEEDEEEEDEDDDDE</sequence>
<comment type="function">
    <text evidence="2 3 7">Multifunctional protein with various roles in different cellular compartments. May act in a redox sensitive manner. Associates with chromatin and binds DNA with a preference for non-canonical DNA structures such as single-stranded DNA. Can bend DNA and enhance DNA flexibility by looping thus providing a mechanism to promote activities on various gene promoters (By similarity). Binds to the delta-1 crystallin/ASL1 enhancer (PubMed:7904558). Proposed to be involved in the innate immune response to nucleic acids by acting as a cytoplasmic promiscuous immunogenic DNA/RNA sensor (By similarity).</text>
</comment>
<comment type="subcellular location">
    <subcellularLocation>
        <location evidence="9">Nucleus</location>
    </subcellularLocation>
    <subcellularLocation>
        <location evidence="8">Chromosome</location>
    </subcellularLocation>
    <subcellularLocation>
        <location evidence="2">Cytoplasm</location>
    </subcellularLocation>
</comment>
<comment type="developmental stage">
    <text>Found in newly hatched chick liver and decreases during postnatal development.</text>
</comment>
<comment type="PTM">
    <text evidence="3">Reduction/oxidation of cysteine residues Cys-23, Cys-45 and Cys-104 and a possible intramolecular disulfide bond involving Cys-23 and Cys-45 give rise to different redox forms with specific functional activities in various cellular compartments: 1- fully reduced HMGB3 (HMGB3C23hC45hC104h), 2- disulfide HMGB3 (HMGB3C23-C45C104h) and 3- sulfonyl HMGB3 (HMGB3C23soC45soC104so).</text>
</comment>
<comment type="similarity">
    <text evidence="8">Belongs to the HMGB family.</text>
</comment>
<evidence type="ECO:0000250" key="1"/>
<evidence type="ECO:0000250" key="2">
    <source>
        <dbReference type="UniProtKB" id="O54879"/>
    </source>
</evidence>
<evidence type="ECO:0000250" key="3">
    <source>
        <dbReference type="UniProtKB" id="P09429"/>
    </source>
</evidence>
<evidence type="ECO:0000250" key="4">
    <source>
        <dbReference type="UniProtKB" id="P63159"/>
    </source>
</evidence>
<evidence type="ECO:0000255" key="5">
    <source>
        <dbReference type="PROSITE-ProRule" id="PRU00267"/>
    </source>
</evidence>
<evidence type="ECO:0000256" key="6">
    <source>
        <dbReference type="SAM" id="MobiDB-lite"/>
    </source>
</evidence>
<evidence type="ECO:0000269" key="7">
    <source>
    </source>
</evidence>
<evidence type="ECO:0000305" key="8"/>
<evidence type="ECO:0000305" key="9">
    <source>
    </source>
</evidence>